<comment type="function">
    <text evidence="4 6">Component of the NuA4 histone acetyltransferase complex which is involved in transcriptional activation of selected genes principally by acetylation of nucleosomal histone H4 and H2A. The NuA4 complex is also involved in DNA repair.</text>
</comment>
<comment type="subunit">
    <text evidence="5 6 7 8">Component of the NuA4 histone acetyltransferase complex composed of at least ACT1, ARP4, YAF9, VID21, SWC4, EAF3, EAF5, EAF6, EAF7, EPL1, ESA1, TRA1 and YNG2. Interacts with SWC4.</text>
</comment>
<comment type="interaction">
    <interactant intactId="EBI-35867">
        <id>Q06337</id>
    </interactant>
    <interactant intactId="EBI-23061">
        <id>P53201</id>
        <label>SWC4</label>
    </interactant>
    <organismsDiffer>false</organismsDiffer>
    <experiments>5</experiments>
</comment>
<comment type="interaction">
    <interactant intactId="EBI-35867">
        <id>Q06337</id>
    </interactant>
    <interactant intactId="EBI-24638">
        <id>P38811</id>
        <label>TRA1</label>
    </interactant>
    <organismsDiffer>false</organismsDiffer>
    <experiments>2</experiments>
</comment>
<comment type="subcellular location">
    <subcellularLocation>
        <location evidence="9">Nucleus</location>
    </subcellularLocation>
</comment>
<comment type="similarity">
    <text evidence="9">Belongs to the EAF1 family.</text>
</comment>
<comment type="sequence caution" evidence="9">
    <conflict type="frameshift">
        <sequence resource="EMBL-CDS" id="AAB64794"/>
    </conflict>
</comment>
<evidence type="ECO:0000255" key="1">
    <source>
        <dbReference type="PROSITE-ProRule" id="PRU00133"/>
    </source>
</evidence>
<evidence type="ECO:0000255" key="2">
    <source>
        <dbReference type="PROSITE-ProRule" id="PRU00549"/>
    </source>
</evidence>
<evidence type="ECO:0000256" key="3">
    <source>
        <dbReference type="SAM" id="MobiDB-lite"/>
    </source>
</evidence>
<evidence type="ECO:0000269" key="4">
    <source>
    </source>
</evidence>
<evidence type="ECO:0000269" key="5">
    <source>
    </source>
</evidence>
<evidence type="ECO:0000269" key="6">
    <source>
    </source>
</evidence>
<evidence type="ECO:0000269" key="7">
    <source>
    </source>
</evidence>
<evidence type="ECO:0000269" key="8">
    <source>
    </source>
</evidence>
<evidence type="ECO:0000305" key="9"/>
<evidence type="ECO:0007744" key="10">
    <source>
    </source>
</evidence>
<evidence type="ECO:0007829" key="11">
    <source>
        <dbReference type="PDB" id="7VVY"/>
    </source>
</evidence>
<evidence type="ECO:0007829" key="12">
    <source>
        <dbReference type="PDB" id="8ESC"/>
    </source>
</evidence>
<protein>
    <recommendedName>
        <fullName>Chromatin modification-related protein EAF1</fullName>
    </recommendedName>
    <alternativeName>
        <fullName>ESA1-associated factor 1</fullName>
    </alternativeName>
    <alternativeName>
        <fullName>Vacuolar import and degradation protein 21</fullName>
    </alternativeName>
</protein>
<accession>Q06337</accession>
<accession>D6VSY8</accession>
<accession>Q6S6F6</accession>
<dbReference type="EMBL" id="AY464182">
    <property type="protein sequence ID" value="AAR27935.1"/>
    <property type="molecule type" value="Genomic_DNA"/>
</dbReference>
<dbReference type="EMBL" id="AY464183">
    <property type="protein sequence ID" value="AAR27936.1"/>
    <property type="molecule type" value="Genomic_DNA"/>
</dbReference>
<dbReference type="EMBL" id="U28372">
    <property type="protein sequence ID" value="AAB64794.1"/>
    <property type="status" value="ALT_FRAME"/>
    <property type="molecule type" value="Genomic_DNA"/>
</dbReference>
<dbReference type="EMBL" id="BK006938">
    <property type="protein sequence ID" value="DAA12198.1"/>
    <property type="molecule type" value="Genomic_DNA"/>
</dbReference>
<dbReference type="PIR" id="S61155">
    <property type="entry name" value="S61155"/>
</dbReference>
<dbReference type="RefSeq" id="NP_010646.4">
    <property type="nucleotide sequence ID" value="NM_001180667.3"/>
</dbReference>
<dbReference type="PDB" id="5Y81">
    <property type="method" value="EM"/>
    <property type="resolution" value="4.70 A"/>
    <property type="chains" value="C=647-982, E=357-397"/>
</dbReference>
<dbReference type="PDB" id="7VVY">
    <property type="method" value="EM"/>
    <property type="resolution" value="3.10 A"/>
    <property type="chains" value="E=1-982"/>
</dbReference>
<dbReference type="PDB" id="7VVZ">
    <property type="method" value="EM"/>
    <property type="resolution" value="8.80 A"/>
    <property type="chains" value="E=1-982"/>
</dbReference>
<dbReference type="PDB" id="7YFN">
    <property type="method" value="EM"/>
    <property type="resolution" value="3.80 A"/>
    <property type="chains" value="D=1-982"/>
</dbReference>
<dbReference type="PDB" id="7YFP">
    <property type="method" value="EM"/>
    <property type="resolution" value="4.00 A"/>
    <property type="chains" value="D=1-982"/>
</dbReference>
<dbReference type="PDB" id="8ESC">
    <property type="method" value="EM"/>
    <property type="resolution" value="3.10 A"/>
    <property type="chains" value="E=1-982"/>
</dbReference>
<dbReference type="PDBsum" id="5Y81"/>
<dbReference type="PDBsum" id="7VVY"/>
<dbReference type="PDBsum" id="7VVZ"/>
<dbReference type="PDBsum" id="7YFN"/>
<dbReference type="PDBsum" id="7YFP"/>
<dbReference type="PDBsum" id="8ESC"/>
<dbReference type="EMDB" id="EMD-28575"/>
<dbReference type="EMDB" id="EMD-32149"/>
<dbReference type="EMDB" id="EMD-32150"/>
<dbReference type="EMDB" id="EMD-33794"/>
<dbReference type="EMDB" id="EMD-33796"/>
<dbReference type="EMDB" id="EMD-6816"/>
<dbReference type="SMR" id="Q06337"/>
<dbReference type="BioGRID" id="32415">
    <property type="interactions" value="843"/>
</dbReference>
<dbReference type="ComplexPortal" id="CPX-3155">
    <property type="entry name" value="NuA4 histone acetyltransferase complex"/>
</dbReference>
<dbReference type="DIP" id="DIP-6330N"/>
<dbReference type="FunCoup" id="Q06337">
    <property type="interactions" value="341"/>
</dbReference>
<dbReference type="IntAct" id="Q06337">
    <property type="interactions" value="29"/>
</dbReference>
<dbReference type="MINT" id="Q06337"/>
<dbReference type="STRING" id="4932.YDR359C"/>
<dbReference type="GlyGen" id="Q06337">
    <property type="glycosylation" value="1 site, 1 O-linked glycan (1 site)"/>
</dbReference>
<dbReference type="iPTMnet" id="Q06337"/>
<dbReference type="PaxDb" id="4932-YDR359C"/>
<dbReference type="PeptideAtlas" id="Q06337"/>
<dbReference type="EnsemblFungi" id="YDR359C_mRNA">
    <property type="protein sequence ID" value="YDR359C"/>
    <property type="gene ID" value="YDR359C"/>
</dbReference>
<dbReference type="GeneID" id="851962"/>
<dbReference type="KEGG" id="sce:YDR359C"/>
<dbReference type="AGR" id="SGD:S000002767"/>
<dbReference type="SGD" id="S000002767">
    <property type="gene designation" value="EAF1"/>
</dbReference>
<dbReference type="VEuPathDB" id="FungiDB:YDR359C"/>
<dbReference type="eggNOG" id="ENOG502QSEY">
    <property type="taxonomic scope" value="Eukaryota"/>
</dbReference>
<dbReference type="HOGENOM" id="CLU_004795_0_0_1"/>
<dbReference type="InParanoid" id="Q06337"/>
<dbReference type="OMA" id="KPLDCKN"/>
<dbReference type="OrthoDB" id="5364245at2759"/>
<dbReference type="BioCyc" id="YEAST:G3O-29910-MONOMER"/>
<dbReference type="BioGRID-ORCS" id="851962">
    <property type="hits" value="0 hits in 10 CRISPR screens"/>
</dbReference>
<dbReference type="PRO" id="PR:Q06337"/>
<dbReference type="Proteomes" id="UP000002311">
    <property type="component" value="Chromosome IV"/>
</dbReference>
<dbReference type="RNAct" id="Q06337">
    <property type="molecule type" value="protein"/>
</dbReference>
<dbReference type="GO" id="GO:0035267">
    <property type="term" value="C:NuA4 histone acetyltransferase complex"/>
    <property type="evidence" value="ECO:0000314"/>
    <property type="project" value="SGD"/>
</dbReference>
<dbReference type="GO" id="GO:0005634">
    <property type="term" value="C:nucleus"/>
    <property type="evidence" value="ECO:0000303"/>
    <property type="project" value="ComplexPortal"/>
</dbReference>
<dbReference type="GO" id="GO:0003682">
    <property type="term" value="F:chromatin binding"/>
    <property type="evidence" value="ECO:0000318"/>
    <property type="project" value="GO_Central"/>
</dbReference>
<dbReference type="GO" id="GO:0006325">
    <property type="term" value="P:chromatin organization"/>
    <property type="evidence" value="ECO:0007669"/>
    <property type="project" value="UniProtKB-KW"/>
</dbReference>
<dbReference type="GO" id="GO:0006281">
    <property type="term" value="P:DNA repair"/>
    <property type="evidence" value="ECO:0000314"/>
    <property type="project" value="SGD"/>
</dbReference>
<dbReference type="GO" id="GO:0006351">
    <property type="term" value="P:DNA-templated transcription"/>
    <property type="evidence" value="ECO:0000303"/>
    <property type="project" value="ComplexPortal"/>
</dbReference>
<dbReference type="GO" id="GO:0065003">
    <property type="term" value="P:protein-containing complex assembly"/>
    <property type="evidence" value="ECO:0000315"/>
    <property type="project" value="SGD"/>
</dbReference>
<dbReference type="CDD" id="cd00167">
    <property type="entry name" value="SANT"/>
    <property type="match status" value="1"/>
</dbReference>
<dbReference type="FunFam" id="1.10.10.60:FF:000484">
    <property type="entry name" value="Chromatin modification-related protein EAF1"/>
    <property type="match status" value="1"/>
</dbReference>
<dbReference type="Gene3D" id="1.10.10.60">
    <property type="entry name" value="Homeodomain-like"/>
    <property type="match status" value="1"/>
</dbReference>
<dbReference type="InterPro" id="IPR009057">
    <property type="entry name" value="Homeodomain-like_sf"/>
</dbReference>
<dbReference type="InterPro" id="IPR014012">
    <property type="entry name" value="HSA_dom"/>
</dbReference>
<dbReference type="InterPro" id="IPR001005">
    <property type="entry name" value="SANT/Myb"/>
</dbReference>
<dbReference type="PANTHER" id="PTHR46459:SF1">
    <property type="entry name" value="E1A-BINDING PROTEIN P400"/>
    <property type="match status" value="1"/>
</dbReference>
<dbReference type="PANTHER" id="PTHR46459">
    <property type="entry name" value="E1A-BINDING PROTEIN P400-RELATED"/>
    <property type="match status" value="1"/>
</dbReference>
<dbReference type="Pfam" id="PF07529">
    <property type="entry name" value="HSA"/>
    <property type="match status" value="1"/>
</dbReference>
<dbReference type="Pfam" id="PF13921">
    <property type="entry name" value="Myb_DNA-bind_6"/>
    <property type="match status" value="1"/>
</dbReference>
<dbReference type="SMART" id="SM00573">
    <property type="entry name" value="HSA"/>
    <property type="match status" value="1"/>
</dbReference>
<dbReference type="SMART" id="SM00717">
    <property type="entry name" value="SANT"/>
    <property type="match status" value="1"/>
</dbReference>
<dbReference type="SUPFAM" id="SSF46689">
    <property type="entry name" value="Homeodomain-like"/>
    <property type="match status" value="1"/>
</dbReference>
<dbReference type="PROSITE" id="PS51204">
    <property type="entry name" value="HSA"/>
    <property type="match status" value="1"/>
</dbReference>
<dbReference type="PROSITE" id="PS50090">
    <property type="entry name" value="MYB_LIKE"/>
    <property type="match status" value="1"/>
</dbReference>
<organism>
    <name type="scientific">Saccharomyces cerevisiae (strain ATCC 204508 / S288c)</name>
    <name type="common">Baker's yeast</name>
    <dbReference type="NCBI Taxonomy" id="559292"/>
    <lineage>
        <taxon>Eukaryota</taxon>
        <taxon>Fungi</taxon>
        <taxon>Dikarya</taxon>
        <taxon>Ascomycota</taxon>
        <taxon>Saccharomycotina</taxon>
        <taxon>Saccharomycetes</taxon>
        <taxon>Saccharomycetales</taxon>
        <taxon>Saccharomycetaceae</taxon>
        <taxon>Saccharomyces</taxon>
    </lineage>
</organism>
<reference key="1">
    <citation type="submission" date="2003-11" db="EMBL/GenBank/DDBJ databases">
        <authorList>
            <person name="Auger A."/>
            <person name="Galarneau L."/>
            <person name="Cote J."/>
        </authorList>
    </citation>
    <scope>NUCLEOTIDE SEQUENCE [GENOMIC DNA]</scope>
    <source>
        <strain>ATCC 200060 / W303</strain>
        <strain>ATCC 201388 / BY4741</strain>
    </source>
</reference>
<reference key="2">
    <citation type="journal article" date="1997" name="Nature">
        <title>The nucleotide sequence of Saccharomyces cerevisiae chromosome IV.</title>
        <authorList>
            <person name="Jacq C."/>
            <person name="Alt-Moerbe J."/>
            <person name="Andre B."/>
            <person name="Arnold W."/>
            <person name="Bahr A."/>
            <person name="Ballesta J.P.G."/>
            <person name="Bargues M."/>
            <person name="Baron L."/>
            <person name="Becker A."/>
            <person name="Biteau N."/>
            <person name="Bloecker H."/>
            <person name="Blugeon C."/>
            <person name="Boskovic J."/>
            <person name="Brandt P."/>
            <person name="Brueckner M."/>
            <person name="Buitrago M.J."/>
            <person name="Coster F."/>
            <person name="Delaveau T."/>
            <person name="del Rey F."/>
            <person name="Dujon B."/>
            <person name="Eide L.G."/>
            <person name="Garcia-Cantalejo J.M."/>
            <person name="Goffeau A."/>
            <person name="Gomez-Peris A."/>
            <person name="Granotier C."/>
            <person name="Hanemann V."/>
            <person name="Hankeln T."/>
            <person name="Hoheisel J.D."/>
            <person name="Jaeger W."/>
            <person name="Jimenez A."/>
            <person name="Jonniaux J.-L."/>
            <person name="Kraemer C."/>
            <person name="Kuester H."/>
            <person name="Laamanen P."/>
            <person name="Legros Y."/>
            <person name="Louis E.J."/>
            <person name="Moeller-Rieker S."/>
            <person name="Monnet A."/>
            <person name="Moro M."/>
            <person name="Mueller-Auer S."/>
            <person name="Nussbaumer B."/>
            <person name="Paricio N."/>
            <person name="Paulin L."/>
            <person name="Perea J."/>
            <person name="Perez-Alonso M."/>
            <person name="Perez-Ortin J.E."/>
            <person name="Pohl T.M."/>
            <person name="Prydz H."/>
            <person name="Purnelle B."/>
            <person name="Rasmussen S.W."/>
            <person name="Remacha M.A."/>
            <person name="Revuelta J.L."/>
            <person name="Rieger M."/>
            <person name="Salom D."/>
            <person name="Saluz H.P."/>
            <person name="Saiz J.E."/>
            <person name="Saren A.-M."/>
            <person name="Schaefer M."/>
            <person name="Scharfe M."/>
            <person name="Schmidt E.R."/>
            <person name="Schneider C."/>
            <person name="Scholler P."/>
            <person name="Schwarz S."/>
            <person name="Soler-Mira A."/>
            <person name="Urrestarazu L.A."/>
            <person name="Verhasselt P."/>
            <person name="Vissers S."/>
            <person name="Voet M."/>
            <person name="Volckaert G."/>
            <person name="Wagner G."/>
            <person name="Wambutt R."/>
            <person name="Wedler E."/>
            <person name="Wedler H."/>
            <person name="Woelfl S."/>
            <person name="Harris D.E."/>
            <person name="Bowman S."/>
            <person name="Brown D."/>
            <person name="Churcher C.M."/>
            <person name="Connor R."/>
            <person name="Dedman K."/>
            <person name="Gentles S."/>
            <person name="Hamlin N."/>
            <person name="Hunt S."/>
            <person name="Jones L."/>
            <person name="McDonald S."/>
            <person name="Murphy L.D."/>
            <person name="Niblett D."/>
            <person name="Odell C."/>
            <person name="Oliver K."/>
            <person name="Rajandream M.A."/>
            <person name="Richards C."/>
            <person name="Shore L."/>
            <person name="Walsh S.V."/>
            <person name="Barrell B.G."/>
            <person name="Dietrich F.S."/>
            <person name="Mulligan J.T."/>
            <person name="Allen E."/>
            <person name="Araujo R."/>
            <person name="Aviles E."/>
            <person name="Berno A."/>
            <person name="Carpenter J."/>
            <person name="Chen E."/>
            <person name="Cherry J.M."/>
            <person name="Chung E."/>
            <person name="Duncan M."/>
            <person name="Hunicke-Smith S."/>
            <person name="Hyman R.W."/>
            <person name="Komp C."/>
            <person name="Lashkari D."/>
            <person name="Lew H."/>
            <person name="Lin D."/>
            <person name="Mosedale D."/>
            <person name="Nakahara K."/>
            <person name="Namath A."/>
            <person name="Oefner P."/>
            <person name="Oh C."/>
            <person name="Petel F.X."/>
            <person name="Roberts D."/>
            <person name="Schramm S."/>
            <person name="Schroeder M."/>
            <person name="Shogren T."/>
            <person name="Shroff N."/>
            <person name="Winant A."/>
            <person name="Yelton M.A."/>
            <person name="Botstein D."/>
            <person name="Davis R.W."/>
            <person name="Johnston M."/>
            <person name="Andrews S."/>
            <person name="Brinkman R."/>
            <person name="Cooper J."/>
            <person name="Ding H."/>
            <person name="Du Z."/>
            <person name="Favello A."/>
            <person name="Fulton L."/>
            <person name="Gattung S."/>
            <person name="Greco T."/>
            <person name="Hallsworth K."/>
            <person name="Hawkins J."/>
            <person name="Hillier L.W."/>
            <person name="Jier M."/>
            <person name="Johnson D."/>
            <person name="Johnston L."/>
            <person name="Kirsten J."/>
            <person name="Kucaba T."/>
            <person name="Langston Y."/>
            <person name="Latreille P."/>
            <person name="Le T."/>
            <person name="Mardis E."/>
            <person name="Menezes S."/>
            <person name="Miller N."/>
            <person name="Nhan M."/>
            <person name="Pauley A."/>
            <person name="Peluso D."/>
            <person name="Rifkin L."/>
            <person name="Riles L."/>
            <person name="Taich A."/>
            <person name="Trevaskis E."/>
            <person name="Vignati D."/>
            <person name="Wilcox L."/>
            <person name="Wohldman P."/>
            <person name="Vaudin M."/>
            <person name="Wilson R."/>
            <person name="Waterston R."/>
            <person name="Albermann K."/>
            <person name="Hani J."/>
            <person name="Heumann K."/>
            <person name="Kleine K."/>
            <person name="Mewes H.-W."/>
            <person name="Zollner A."/>
            <person name="Zaccaria P."/>
        </authorList>
    </citation>
    <scope>NUCLEOTIDE SEQUENCE [LARGE SCALE GENOMIC DNA]</scope>
    <source>
        <strain>ATCC 204508 / S288c</strain>
    </source>
</reference>
<reference key="3">
    <citation type="journal article" date="2014" name="G3 (Bethesda)">
        <title>The reference genome sequence of Saccharomyces cerevisiae: Then and now.</title>
        <authorList>
            <person name="Engel S.R."/>
            <person name="Dietrich F.S."/>
            <person name="Fisk D.G."/>
            <person name="Binkley G."/>
            <person name="Balakrishnan R."/>
            <person name="Costanzo M.C."/>
            <person name="Dwight S.S."/>
            <person name="Hitz B.C."/>
            <person name="Karra K."/>
            <person name="Nash R.S."/>
            <person name="Weng S."/>
            <person name="Wong E.D."/>
            <person name="Lloyd P."/>
            <person name="Skrzypek M.S."/>
            <person name="Miyasato S.R."/>
            <person name="Simison M."/>
            <person name="Cherry J.M."/>
        </authorList>
    </citation>
    <scope>GENOME REANNOTATION</scope>
    <source>
        <strain>ATCC 204508 / S288c</strain>
    </source>
</reference>
<reference key="4">
    <citation type="journal article" date="2001" name="Nat. Genet.">
        <title>Genes required for ionizing radiation resistance in yeast.</title>
        <authorList>
            <person name="Bennett C.B."/>
            <person name="Lewis L.K."/>
            <person name="Karthikeyan G."/>
            <person name="Lobachev K.S."/>
            <person name="Jin Y.H."/>
            <person name="Sterling J.F."/>
            <person name="Snipe J.R."/>
            <person name="Resnick M.A."/>
        </authorList>
    </citation>
    <scope>FUNCTION</scope>
</reference>
<reference key="5">
    <citation type="journal article" date="2003" name="Mol. Cell">
        <title>Assigning function to yeast proteins by integration of technologies.</title>
        <authorList>
            <person name="Hazbun T.R."/>
            <person name="Malmstroem L."/>
            <person name="Anderson S."/>
            <person name="Graczyk B.J."/>
            <person name="Fox B."/>
            <person name="Riffle M."/>
            <person name="Sundin B.A."/>
            <person name="Aranda J.D."/>
            <person name="McDonald W.H."/>
            <person name="Chiu C.-H."/>
            <person name="Snydsman B.E."/>
            <person name="Bradley P."/>
            <person name="Muller E.G.D."/>
            <person name="Fields S."/>
            <person name="Baker D."/>
            <person name="Yates J.R. III"/>
            <person name="Davis T.N."/>
        </authorList>
    </citation>
    <scope>IDENTIFICATION BY MASS SPECTROMETRY</scope>
    <scope>INTERACTION WITH SWC4</scope>
</reference>
<reference key="6">
    <citation type="journal article" date="2004" name="Mol. Cell. Biol.">
        <title>The Yaf9 component of the SWR1 and NuA4 complexes is required for proper gene expression, histone H4 acetylation, and Htz1 replacement near telomeres.</title>
        <authorList>
            <person name="Zhang H."/>
            <person name="Richardson D.O."/>
            <person name="Roberts D.N."/>
            <person name="Utley R.T."/>
            <person name="Erdjument-Bromage H."/>
            <person name="Tempst P."/>
            <person name="Cote J."/>
            <person name="Cairns B.R."/>
        </authorList>
    </citation>
    <scope>IDENTIFICATION IN THE NUA4 COMPLEX</scope>
    <scope>IDENTIFICATION BY MASS SPECTROMETRY</scope>
</reference>
<reference key="7">
    <citation type="journal article" date="2004" name="PLoS Biol.">
        <title>A protein complex containing the conserved Swi2/Snf2-related ATPase Swr1p deposits histone variant H2A.Z into euchromatin.</title>
        <authorList>
            <person name="Kobor M.S."/>
            <person name="Venkatasubrahmanyam S."/>
            <person name="Meneghini M.D."/>
            <person name="Gin J.W."/>
            <person name="Jennings J.L."/>
            <person name="Link A.J."/>
            <person name="Madhani H.D."/>
            <person name="Rine J."/>
        </authorList>
    </citation>
    <scope>FUNCTION</scope>
    <scope>IDENTIFICATION IN THE NUA4 COMPLEX</scope>
    <scope>IDENTIFICATION BY MASS SPECTROMETRY</scope>
</reference>
<reference key="8">
    <citation type="journal article" date="2004" name="Proc. Natl. Acad. Sci. U.S.A.">
        <title>Regulation of chromosome stability by the histone H2A variant Htz1, the Swr1 chromatin remodeling complex, and the histone acetyltransferase NuA4.</title>
        <authorList>
            <person name="Krogan N.J."/>
            <person name="Baetz K."/>
            <person name="Keogh M.-C."/>
            <person name="Datta N."/>
            <person name="Sawa C."/>
            <person name="Kwok T.C.Y."/>
            <person name="Thompson N.J."/>
            <person name="Davey M.G."/>
            <person name="Pootoolal J."/>
            <person name="Hughes T.R."/>
            <person name="Emili A."/>
            <person name="Buratowski S."/>
            <person name="Hieter P."/>
            <person name="Greenblatt J.F."/>
        </authorList>
    </citation>
    <scope>IDENTIFICATION IN THE NUA4 COMPLEX</scope>
    <scope>IDENTIFICATION BY MASS SPECTROMETRY</scope>
</reference>
<reference key="9">
    <citation type="journal article" date="2008" name="Mol. Cell. Proteomics">
        <title>A multidimensional chromatography technology for in-depth phosphoproteome analysis.</title>
        <authorList>
            <person name="Albuquerque C.P."/>
            <person name="Smolka M.B."/>
            <person name="Payne S.H."/>
            <person name="Bafna V."/>
            <person name="Eng J."/>
            <person name="Zhou H."/>
        </authorList>
    </citation>
    <scope>PHOSPHORYLATION [LARGE SCALE ANALYSIS] AT SER-841 AND THR-971</scope>
    <scope>IDENTIFICATION BY MASS SPECTROMETRY [LARGE SCALE ANALYSIS]</scope>
</reference>
<name>EAF1_YEAST</name>
<proteinExistence type="evidence at protein level"/>
<gene>
    <name type="primary">EAF1</name>
    <name type="synonym">VID21</name>
    <name type="ordered locus">YDR359C</name>
</gene>
<feature type="chain" id="PRO_0000065825" description="Chromatin modification-related protein EAF1">
    <location>
        <begin position="1"/>
        <end position="982"/>
    </location>
</feature>
<feature type="domain" description="HSA" evidence="2">
    <location>
        <begin position="346"/>
        <end position="425"/>
    </location>
</feature>
<feature type="domain" description="Myb-like" evidence="1">
    <location>
        <begin position="642"/>
        <end position="704"/>
    </location>
</feature>
<feature type="region of interest" description="Disordered" evidence="3">
    <location>
        <begin position="1"/>
        <end position="31"/>
    </location>
</feature>
<feature type="region of interest" description="Disordered" evidence="3">
    <location>
        <begin position="115"/>
        <end position="143"/>
    </location>
</feature>
<feature type="region of interest" description="Disordered" evidence="3">
    <location>
        <begin position="157"/>
        <end position="207"/>
    </location>
</feature>
<feature type="region of interest" description="Disordered" evidence="3">
    <location>
        <begin position="414"/>
        <end position="440"/>
    </location>
</feature>
<feature type="region of interest" description="Disordered" evidence="3">
    <location>
        <begin position="768"/>
        <end position="792"/>
    </location>
</feature>
<feature type="region of interest" description="Disordered" evidence="3">
    <location>
        <begin position="822"/>
        <end position="872"/>
    </location>
</feature>
<feature type="region of interest" description="Disordered" evidence="3">
    <location>
        <begin position="913"/>
        <end position="982"/>
    </location>
</feature>
<feature type="compositionally biased region" description="Polar residues" evidence="3">
    <location>
        <begin position="1"/>
        <end position="18"/>
    </location>
</feature>
<feature type="compositionally biased region" description="Basic and acidic residues" evidence="3">
    <location>
        <begin position="20"/>
        <end position="31"/>
    </location>
</feature>
<feature type="compositionally biased region" description="Basic and acidic residues" evidence="3">
    <location>
        <begin position="115"/>
        <end position="124"/>
    </location>
</feature>
<feature type="compositionally biased region" description="Low complexity" evidence="3">
    <location>
        <begin position="186"/>
        <end position="199"/>
    </location>
</feature>
<feature type="compositionally biased region" description="Low complexity" evidence="3">
    <location>
        <begin position="825"/>
        <end position="841"/>
    </location>
</feature>
<feature type="compositionally biased region" description="Polar residues" evidence="3">
    <location>
        <begin position="842"/>
        <end position="871"/>
    </location>
</feature>
<feature type="compositionally biased region" description="Low complexity" evidence="3">
    <location>
        <begin position="913"/>
        <end position="941"/>
    </location>
</feature>
<feature type="compositionally biased region" description="Low complexity" evidence="3">
    <location>
        <begin position="949"/>
        <end position="965"/>
    </location>
</feature>
<feature type="modified residue" description="Phosphoserine" evidence="10">
    <location>
        <position position="841"/>
    </location>
</feature>
<feature type="modified residue" description="Phosphothreonine" evidence="10">
    <location>
        <position position="971"/>
    </location>
</feature>
<feature type="helix" evidence="11">
    <location>
        <begin position="242"/>
        <end position="247"/>
    </location>
</feature>
<feature type="strand" evidence="11">
    <location>
        <begin position="268"/>
        <end position="273"/>
    </location>
</feature>
<feature type="strand" evidence="11">
    <location>
        <begin position="275"/>
        <end position="277"/>
    </location>
</feature>
<feature type="strand" evidence="11">
    <location>
        <begin position="279"/>
        <end position="282"/>
    </location>
</feature>
<feature type="helix" evidence="11">
    <location>
        <begin position="287"/>
        <end position="294"/>
    </location>
</feature>
<feature type="helix" evidence="11">
    <location>
        <begin position="299"/>
        <end position="301"/>
    </location>
</feature>
<feature type="turn" evidence="11">
    <location>
        <begin position="302"/>
        <end position="305"/>
    </location>
</feature>
<feature type="helix" evidence="11">
    <location>
        <begin position="313"/>
        <end position="336"/>
    </location>
</feature>
<feature type="strand" evidence="12">
    <location>
        <begin position="343"/>
        <end position="345"/>
    </location>
</feature>
<feature type="helix" evidence="11">
    <location>
        <begin position="358"/>
        <end position="396"/>
    </location>
</feature>
<feature type="helix" evidence="12">
    <location>
        <begin position="399"/>
        <end position="401"/>
    </location>
</feature>
<feature type="strand" evidence="11">
    <location>
        <begin position="546"/>
        <end position="548"/>
    </location>
</feature>
<feature type="helix" evidence="11">
    <location>
        <begin position="549"/>
        <end position="551"/>
    </location>
</feature>
<feature type="helix" evidence="11">
    <location>
        <begin position="554"/>
        <end position="562"/>
    </location>
</feature>
<feature type="strand" evidence="11">
    <location>
        <begin position="586"/>
        <end position="589"/>
    </location>
</feature>
<feature type="strand" evidence="11">
    <location>
        <begin position="598"/>
        <end position="604"/>
    </location>
</feature>
<feature type="helix" evidence="11">
    <location>
        <begin position="613"/>
        <end position="616"/>
    </location>
</feature>
<feature type="strand" evidence="11">
    <location>
        <begin position="620"/>
        <end position="622"/>
    </location>
</feature>
<feature type="helix" evidence="11">
    <location>
        <begin position="628"/>
        <end position="630"/>
    </location>
</feature>
<feature type="helix" evidence="12">
    <location>
        <begin position="640"/>
        <end position="642"/>
    </location>
</feature>
<feature type="helix" evidence="11">
    <location>
        <begin position="654"/>
        <end position="665"/>
    </location>
</feature>
<feature type="helix" evidence="11">
    <location>
        <begin position="671"/>
        <end position="676"/>
    </location>
</feature>
<feature type="strand" evidence="12">
    <location>
        <begin position="680"/>
        <end position="682"/>
    </location>
</feature>
<feature type="turn" evidence="11">
    <location>
        <begin position="687"/>
        <end position="689"/>
    </location>
</feature>
<feature type="helix" evidence="11">
    <location>
        <begin position="693"/>
        <end position="703"/>
    </location>
</feature>
<feature type="turn" evidence="11">
    <location>
        <begin position="708"/>
        <end position="713"/>
    </location>
</feature>
<feature type="helix" evidence="11">
    <location>
        <begin position="717"/>
        <end position="734"/>
    </location>
</feature>
<feature type="strand" evidence="12">
    <location>
        <begin position="741"/>
        <end position="743"/>
    </location>
</feature>
<feature type="helix" evidence="11">
    <location>
        <begin position="745"/>
        <end position="747"/>
    </location>
</feature>
<feature type="helix" evidence="11">
    <location>
        <begin position="750"/>
        <end position="752"/>
    </location>
</feature>
<feature type="strand" evidence="11">
    <location>
        <begin position="753"/>
        <end position="755"/>
    </location>
</feature>
<feature type="helix" evidence="11">
    <location>
        <begin position="757"/>
        <end position="771"/>
    </location>
</feature>
<feature type="helix" evidence="11">
    <location>
        <begin position="797"/>
        <end position="806"/>
    </location>
</feature>
<feature type="turn" evidence="11">
    <location>
        <begin position="807"/>
        <end position="809"/>
    </location>
</feature>
<keyword id="KW-0002">3D-structure</keyword>
<keyword id="KW-0010">Activator</keyword>
<keyword id="KW-0156">Chromatin regulator</keyword>
<keyword id="KW-0227">DNA damage</keyword>
<keyword id="KW-0234">DNA repair</keyword>
<keyword id="KW-0539">Nucleus</keyword>
<keyword id="KW-0597">Phosphoprotein</keyword>
<keyword id="KW-1185">Reference proteome</keyword>
<keyword id="KW-0804">Transcription</keyword>
<keyword id="KW-0805">Transcription regulation</keyword>
<sequence length="982" mass="112502">MSSRPSSAVPNSASLSEDQSSDRSKFPKADDLIDERDRKLTELYCVSRLNQLLELTDENKLRKEIDAFLKKNDIRRGIRFDEASLPKLLHTAATPITKKKLKDVNLINVPNQRLSDSKMSRELPENSENVSVKSESHFVPSHDNSIRENMMDSLRPAEKTGGMWNKRPLESTMGGEEERHEKRQKMQSQSLESSNNSEMASLPISPRPPVPNALAHYTYYENIEYPPADPTEVQPAVKFKDPLIKNIMAKEIDTSDHYNENNVDALETVFLLMNDYIPSKIPQALPLAELKYMSQTLPLINLIPRAHKALTTNIINNALNEARITVVGSRIEELRRLGLWSLRQPKRFIDPWKQHNTHQNILLEEAKWMQADFKEGHKYKVAICTAMAQAIKDYWTYGEICCVKRKTLLPGKENKLSDDGRISEKSGRPSDTSRNDSDISIAGKDDIGIIANVDDITEKESAAANDNDENGKNEAGAKSDFDFADGLLSQEGAHDQIISSIDTKLLLKKPSSSSEVVLIQHEVAASSALIETEESKKELAPPFKLSIFVDELNTFEKTLIQDLPLYNGINEERPKKDDSLPFIPISKSVVSLDDNGFYKLLERQLIDEEPSISQLSKRRGMFYGNRRNHYLRPPAVPSLRYLQNRTPTIWLSEDDQELVKNINTYGYNWELISAHMTHRLTYSYLSNIERRTPWQCFERFVQLNERFNFSDLKGPRAHSAQQWLIEAHKFQQRQNRRISPLGVNTESIQRGHRRLRWASMFEAIRKCMKKRENTPRPNPTQPRKPLDCKNMKVPTPAEMSLLKAQRDEALRRDIQLRRTVKNRLQQRQQQSQQAHSSRAQSPIPSNGKSSSNLARNGQASAPRPNQKQYTEQDIIESYSRKLLEQKPDIGPEMALKAAKNYYRTLREQQQQLKQHQIQQQRQQLQEESSHVQQLQQLQPGSQAPPPKSSPSQSSLSNISNINSAPRIKSPTPQEILQRFQKQ</sequence>